<sequence>MQIFVKTLTGKTITLEVESSDTIDNVKSKIQDKEGIPPDQQRLIFAGKQLEDGRTLSDYNIQKESTLHLVLRLRGGGKKRKKKTYTTPKKIKHKHKKVELAVLKYYKVEDDGSVKRLRRECPNCGASTFMANHKDRLYCGRCHLTLKLEN</sequence>
<proteinExistence type="evidence at protein level"/>
<name>RS27A_SCHPO</name>
<evidence type="ECO:0000250" key="1"/>
<evidence type="ECO:0000250" key="2">
    <source>
        <dbReference type="UniProtKB" id="P05759"/>
    </source>
</evidence>
<evidence type="ECO:0000250" key="3">
    <source>
        <dbReference type="UniProtKB" id="P35997"/>
    </source>
</evidence>
<evidence type="ECO:0000255" key="4">
    <source>
        <dbReference type="PROSITE-ProRule" id="PRU00214"/>
    </source>
</evidence>
<evidence type="ECO:0000269" key="5">
    <source>
    </source>
</evidence>
<evidence type="ECO:0000305" key="6"/>
<feature type="chain" id="PRO_0000396486" description="Ubiquitin">
    <location>
        <begin position="1"/>
        <end position="76"/>
    </location>
</feature>
<feature type="chain" id="PRO_0000137687" description="Small ribosomal subunit protein eS31A">
    <location>
        <begin position="77"/>
        <end position="150"/>
    </location>
</feature>
<feature type="domain" description="Ubiquitin-like" evidence="4">
    <location>
        <begin position="1"/>
        <end position="76"/>
    </location>
</feature>
<feature type="zinc finger region" description="C4-type" evidence="3">
    <location>
        <begin position="121"/>
        <end position="142"/>
    </location>
</feature>
<feature type="cross-link" description="Glycyl lysine isopeptide (Lys-Gly) (interchain with G-Cter in ubiquitin)">
    <location>
        <position position="6"/>
    </location>
</feature>
<feature type="cross-link" description="Glycyl lysine isopeptide (Lys-Gly) (interchain with G-Cter in ubiquitin)">
    <location>
        <position position="11"/>
    </location>
</feature>
<feature type="cross-link" description="Glycyl lysine isopeptide (Lys-Gly) (interchain with G-Cter in ubiquitin)">
    <location>
        <position position="27"/>
    </location>
</feature>
<feature type="cross-link" description="Glycyl lysine isopeptide (Lys-Gly) (interchain with G-Cter in ubiquitin)" evidence="1">
    <location>
        <position position="29"/>
    </location>
</feature>
<feature type="cross-link" description="Glycyl lysine isopeptide (Lys-Gly) (interchain with G-Cter in ubiquitin)">
    <location>
        <position position="33"/>
    </location>
</feature>
<feature type="cross-link" description="Glycyl lysine isopeptide (Lys-Gly) (interchain with G-Cter in ubiquitin)" evidence="1">
    <location>
        <position position="48"/>
    </location>
</feature>
<feature type="cross-link" description="Glycyl lysine isopeptide (Lys-Gly) (interchain with G-Cter in ubiquitin)" evidence="1">
    <location>
        <position position="63"/>
    </location>
</feature>
<feature type="cross-link" description="Glycyl lysine isopeptide (Gly-Lys) (interchain with K-? in acceptor proteins)" evidence="4">
    <location>
        <position position="76"/>
    </location>
</feature>
<keyword id="KW-0963">Cytoplasm</keyword>
<keyword id="KW-1017">Isopeptide bond</keyword>
<keyword id="KW-0479">Metal-binding</keyword>
<keyword id="KW-0539">Nucleus</keyword>
<keyword id="KW-1185">Reference proteome</keyword>
<keyword id="KW-0687">Ribonucleoprotein</keyword>
<keyword id="KW-0689">Ribosomal protein</keyword>
<keyword id="KW-0832">Ubl conjugation</keyword>
<keyword id="KW-0862">Zinc</keyword>
<keyword id="KW-0863">Zinc-finger</keyword>
<gene>
    <name type="primary">ubi3</name>
    <name type="ORF">SPAC6G10.11c</name>
</gene>
<protein>
    <recommendedName>
        <fullName evidence="6">Ubiquitin-ribosomal protein eS31A fusion protein</fullName>
    </recommendedName>
    <component>
        <recommendedName>
            <fullName>Ubiquitin</fullName>
        </recommendedName>
    </component>
    <component>
        <recommendedName>
            <fullName evidence="6">Small ribosomal subunit protein eS31A</fullName>
        </recommendedName>
        <alternativeName>
            <fullName>40S ribosomal protein S27a</fullName>
        </alternativeName>
    </component>
</protein>
<comment type="function">
    <molecule>Ubiquitin</molecule>
    <text evidence="1">Exists either covalently attached to another protein, or free (unanchored). When covalently bound, it is conjugated to target proteins via an isopeptide bond either as a monomer (monoubiquitin), a polymer linked via different Lys residues of the ubiquitin (polyubiquitin chains) or a linear polymer linked via the initiator Met of the ubiquitin (linear polyubiquitin chains). Polyubiquitin chains, when attached to a target protein, have different functions depending on the Lys residue of the ubiquitin that is linked: Lys-6-linked may be involved in DNA repair; Lys-11-linked is involved in ERAD (endoplasmic reticulum-associated degradation) and in cell-cycle regulation; Lys-29-linked is involved in lysosomal degradation; Lys-33-linked is involved in kinase modification; Lys-48-linked is involved in protein degradation via the proteasome; Lys-63-linked is involved in endocytosis, and DNA-damage responses. Linear polymer chains formed via attachment by the initiator Met lead to cell signaling. Ubiquitin is usually conjugated to Lys residues of target proteins, however, in rare cases, conjugation to Cys or Ser residues has been observed. When polyubiquitin is free (unanchored-polyubiquitin), it also has distinct roles, such as in activation of protein kinases, and in signaling (By similarity).</text>
</comment>
<comment type="function">
    <molecule>Small ribosomal subunit protein eS31A</molecule>
    <text evidence="2">Component of the ribosome, a large ribonucleoprotein complex responsible for the synthesis of proteins in the cell. The small ribosomal subunit (SSU) binds messenger RNAs (mRNAs) and translates the encoded message by selecting cognate aminoacyl-transfer RNA (tRNA) molecules. The large subunit (LSU) contains the ribosomal catalytic site termed the peptidyl transferase center (PTC), which catalyzes the formation of peptide bonds, thereby polymerizing the amino acids delivered by tRNAs into a polypeptide chain. The nascent polypeptides leave the ribosome through a tunnel in the LSU and interact with protein factors that function in enzymatic processing, targeting, and the membrane insertion of nascent chains at the exit of the ribosomal tunnel.</text>
</comment>
<comment type="subunit">
    <molecule>Small ribosomal subunit protein eS31A</molecule>
    <text evidence="2">Component of the small ribosomal subunit (SSU). Mature yeast ribosomes consist of a small (40S) and a large (60S) subunit. The 40S small subunit contains 1 molecule of ribosomal RNA (18S rRNA) and at least 33 different proteins. The large 60S subunit contains 3 rRNA molecules (25S, 5.8S and 5S rRNA) and at least 46 different proteins.</text>
</comment>
<comment type="subcellular location">
    <molecule>Ubiquitin</molecule>
    <subcellularLocation>
        <location evidence="1">Cytoplasm</location>
    </subcellularLocation>
    <subcellularLocation>
        <location evidence="1">Nucleus</location>
    </subcellularLocation>
</comment>
<comment type="subcellular location">
    <molecule>Small ribosomal subunit protein eS31A</molecule>
    <subcellularLocation>
        <location evidence="5">Cytoplasm</location>
    </subcellularLocation>
    <subcellularLocation>
        <location evidence="5">Nucleus</location>
    </subcellularLocation>
</comment>
<comment type="miscellaneous">
    <text evidence="6">Ubiquitin is encoded by 5 different genes. Ubi1 and ubi2 are synthesized as a polyprotein with one copy of ubiquitin fused to ribosomal proteins eL40A and eL40B, respectively. Ubi3 and ubi5 are polyproteins with one copy of ubiquitin fused to ribosomal proteins eS31A and eS31B, respectively. Ubi4 is a polyprotein containing 5 exact head to tail repeats of ubiquitin.</text>
</comment>
<comment type="miscellaneous">
    <text>There are 2 genes for eS31 in S.pombe.</text>
</comment>
<comment type="similarity">
    <text evidence="6">In the N-terminal section; belongs to the ubiquitin family.</text>
</comment>
<comment type="similarity">
    <text evidence="6">In the C-terminal section; belongs to the eukaryotic ribosomal protein eS31 family.</text>
</comment>
<reference key="1">
    <citation type="journal article" date="2002" name="Nature">
        <title>The genome sequence of Schizosaccharomyces pombe.</title>
        <authorList>
            <person name="Wood V."/>
            <person name="Gwilliam R."/>
            <person name="Rajandream M.A."/>
            <person name="Lyne M.H."/>
            <person name="Lyne R."/>
            <person name="Stewart A."/>
            <person name="Sgouros J.G."/>
            <person name="Peat N."/>
            <person name="Hayles J."/>
            <person name="Baker S.G."/>
            <person name="Basham D."/>
            <person name="Bowman S."/>
            <person name="Brooks K."/>
            <person name="Brown D."/>
            <person name="Brown S."/>
            <person name="Chillingworth T."/>
            <person name="Churcher C.M."/>
            <person name="Collins M."/>
            <person name="Connor R."/>
            <person name="Cronin A."/>
            <person name="Davis P."/>
            <person name="Feltwell T."/>
            <person name="Fraser A."/>
            <person name="Gentles S."/>
            <person name="Goble A."/>
            <person name="Hamlin N."/>
            <person name="Harris D.E."/>
            <person name="Hidalgo J."/>
            <person name="Hodgson G."/>
            <person name="Holroyd S."/>
            <person name="Hornsby T."/>
            <person name="Howarth S."/>
            <person name="Huckle E.J."/>
            <person name="Hunt S."/>
            <person name="Jagels K."/>
            <person name="James K.D."/>
            <person name="Jones L."/>
            <person name="Jones M."/>
            <person name="Leather S."/>
            <person name="McDonald S."/>
            <person name="McLean J."/>
            <person name="Mooney P."/>
            <person name="Moule S."/>
            <person name="Mungall K.L."/>
            <person name="Murphy L.D."/>
            <person name="Niblett D."/>
            <person name="Odell C."/>
            <person name="Oliver K."/>
            <person name="O'Neil S."/>
            <person name="Pearson D."/>
            <person name="Quail M.A."/>
            <person name="Rabbinowitsch E."/>
            <person name="Rutherford K.M."/>
            <person name="Rutter S."/>
            <person name="Saunders D."/>
            <person name="Seeger K."/>
            <person name="Sharp S."/>
            <person name="Skelton J."/>
            <person name="Simmonds M.N."/>
            <person name="Squares R."/>
            <person name="Squares S."/>
            <person name="Stevens K."/>
            <person name="Taylor K."/>
            <person name="Taylor R.G."/>
            <person name="Tivey A."/>
            <person name="Walsh S.V."/>
            <person name="Warren T."/>
            <person name="Whitehead S."/>
            <person name="Woodward J.R."/>
            <person name="Volckaert G."/>
            <person name="Aert R."/>
            <person name="Robben J."/>
            <person name="Grymonprez B."/>
            <person name="Weltjens I."/>
            <person name="Vanstreels E."/>
            <person name="Rieger M."/>
            <person name="Schaefer M."/>
            <person name="Mueller-Auer S."/>
            <person name="Gabel C."/>
            <person name="Fuchs M."/>
            <person name="Duesterhoeft A."/>
            <person name="Fritzc C."/>
            <person name="Holzer E."/>
            <person name="Moestl D."/>
            <person name="Hilbert H."/>
            <person name="Borzym K."/>
            <person name="Langer I."/>
            <person name="Beck A."/>
            <person name="Lehrach H."/>
            <person name="Reinhardt R."/>
            <person name="Pohl T.M."/>
            <person name="Eger P."/>
            <person name="Zimmermann W."/>
            <person name="Wedler H."/>
            <person name="Wambutt R."/>
            <person name="Purnelle B."/>
            <person name="Goffeau A."/>
            <person name="Cadieu E."/>
            <person name="Dreano S."/>
            <person name="Gloux S."/>
            <person name="Lelaure V."/>
            <person name="Mottier S."/>
            <person name="Galibert F."/>
            <person name="Aves S.J."/>
            <person name="Xiang Z."/>
            <person name="Hunt C."/>
            <person name="Moore K."/>
            <person name="Hurst S.M."/>
            <person name="Lucas M."/>
            <person name="Rochet M."/>
            <person name="Gaillardin C."/>
            <person name="Tallada V.A."/>
            <person name="Garzon A."/>
            <person name="Thode G."/>
            <person name="Daga R.R."/>
            <person name="Cruzado L."/>
            <person name="Jimenez J."/>
            <person name="Sanchez M."/>
            <person name="del Rey F."/>
            <person name="Benito J."/>
            <person name="Dominguez A."/>
            <person name="Revuelta J.L."/>
            <person name="Moreno S."/>
            <person name="Armstrong J."/>
            <person name="Forsburg S.L."/>
            <person name="Cerutti L."/>
            <person name="Lowe T."/>
            <person name="McCombie W.R."/>
            <person name="Paulsen I."/>
            <person name="Potashkin J."/>
            <person name="Shpakovski G.V."/>
            <person name="Ussery D."/>
            <person name="Barrell B.G."/>
            <person name="Nurse P."/>
        </authorList>
    </citation>
    <scope>NUCLEOTIDE SEQUENCE [LARGE SCALE GENOMIC DNA]</scope>
    <source>
        <strain>972 / ATCC 24843</strain>
    </source>
</reference>
<reference key="2">
    <citation type="journal article" date="2006" name="Nat. Biotechnol.">
        <title>ORFeome cloning and global analysis of protein localization in the fission yeast Schizosaccharomyces pombe.</title>
        <authorList>
            <person name="Matsuyama A."/>
            <person name="Arai R."/>
            <person name="Yashiroda Y."/>
            <person name="Shirai A."/>
            <person name="Kamata A."/>
            <person name="Sekido S."/>
            <person name="Kobayashi Y."/>
            <person name="Hashimoto A."/>
            <person name="Hamamoto M."/>
            <person name="Hiraoka Y."/>
            <person name="Horinouchi S."/>
            <person name="Yoshida M."/>
        </authorList>
    </citation>
    <scope>SUBCELLULAR LOCATION [LARGE SCALE ANALYSIS]</scope>
</reference>
<accession>P0C016</accession>
<accession>O13697</accession>
<accession>O14257</accession>
<accession>P0C014</accession>
<accession>Q76PD0</accession>
<accession>Q9HDZ4</accession>
<organism>
    <name type="scientific">Schizosaccharomyces pombe (strain 972 / ATCC 24843)</name>
    <name type="common">Fission yeast</name>
    <dbReference type="NCBI Taxonomy" id="284812"/>
    <lineage>
        <taxon>Eukaryota</taxon>
        <taxon>Fungi</taxon>
        <taxon>Dikarya</taxon>
        <taxon>Ascomycota</taxon>
        <taxon>Taphrinomycotina</taxon>
        <taxon>Schizosaccharomycetes</taxon>
        <taxon>Schizosaccharomycetales</taxon>
        <taxon>Schizosaccharomycetaceae</taxon>
        <taxon>Schizosaccharomyces</taxon>
    </lineage>
</organism>
<dbReference type="EMBL" id="CU329670">
    <property type="protein sequence ID" value="CAB11297.1"/>
    <property type="molecule type" value="Genomic_DNA"/>
</dbReference>
<dbReference type="PIR" id="T39061">
    <property type="entry name" value="T39061"/>
</dbReference>
<dbReference type="RefSeq" id="NP_594108.1">
    <property type="nucleotide sequence ID" value="NM_001019532.2"/>
</dbReference>
<dbReference type="BMRB" id="P0C016"/>
<dbReference type="SMR" id="P0C016"/>
<dbReference type="BioGRID" id="277950">
    <property type="interactions" value="4"/>
</dbReference>
<dbReference type="FunCoup" id="P0C016">
    <property type="interactions" value="708"/>
</dbReference>
<dbReference type="STRING" id="284812.P0C016"/>
<dbReference type="iPTMnet" id="P0C016"/>
<dbReference type="PaxDb" id="4896-SPAC6G10.11c.1"/>
<dbReference type="EnsemblFungi" id="SPAC6G10.11c.1">
    <property type="protein sequence ID" value="SPAC6G10.11c.1:pep"/>
    <property type="gene ID" value="SPAC6G10.11c"/>
</dbReference>
<dbReference type="GeneID" id="2541445"/>
<dbReference type="KEGG" id="spo:2541445"/>
<dbReference type="PomBase" id="SPAC6G10.11c">
    <property type="gene designation" value="ubi3"/>
</dbReference>
<dbReference type="VEuPathDB" id="FungiDB:SPAC6G10.11c"/>
<dbReference type="eggNOG" id="KOG0004">
    <property type="taxonomic scope" value="Eukaryota"/>
</dbReference>
<dbReference type="HOGENOM" id="CLU_010412_2_0_1"/>
<dbReference type="InParanoid" id="P0C016"/>
<dbReference type="OMA" id="HANRHYC"/>
<dbReference type="PhylomeDB" id="P0C016"/>
<dbReference type="Reactome" id="R-SPO-156827">
    <property type="pathway name" value="L13a-mediated translational silencing of Ceruloplasmin expression"/>
</dbReference>
<dbReference type="Reactome" id="R-SPO-1799339">
    <property type="pathway name" value="SRP-dependent cotranslational protein targeting to membrane"/>
</dbReference>
<dbReference type="Reactome" id="R-SPO-72649">
    <property type="pathway name" value="Translation initiation complex formation"/>
</dbReference>
<dbReference type="Reactome" id="R-SPO-72689">
    <property type="pathway name" value="Formation of a pool of free 40S subunits"/>
</dbReference>
<dbReference type="Reactome" id="R-SPO-72695">
    <property type="pathway name" value="Formation of the ternary complex, and subsequently, the 43S complex"/>
</dbReference>
<dbReference type="Reactome" id="R-SPO-72702">
    <property type="pathway name" value="Ribosomal scanning and start codon recognition"/>
</dbReference>
<dbReference type="Reactome" id="R-SPO-72706">
    <property type="pathway name" value="GTP hydrolysis and joining of the 60S ribosomal subunit"/>
</dbReference>
<dbReference type="Reactome" id="R-SPO-975956">
    <property type="pathway name" value="Nonsense Mediated Decay (NMD) independent of the Exon Junction Complex (EJC)"/>
</dbReference>
<dbReference type="Reactome" id="R-SPO-975957">
    <property type="pathway name" value="Nonsense Mediated Decay (NMD) enhanced by the Exon Junction Complex (EJC)"/>
</dbReference>
<dbReference type="PRO" id="PR:P0C016"/>
<dbReference type="Proteomes" id="UP000002485">
    <property type="component" value="Chromosome I"/>
</dbReference>
<dbReference type="GO" id="GO:0005737">
    <property type="term" value="C:cytoplasm"/>
    <property type="evidence" value="ECO:0000318"/>
    <property type="project" value="GO_Central"/>
</dbReference>
<dbReference type="GO" id="GO:0005829">
    <property type="term" value="C:cytosol"/>
    <property type="evidence" value="ECO:0007005"/>
    <property type="project" value="PomBase"/>
</dbReference>
<dbReference type="GO" id="GO:0022627">
    <property type="term" value="C:cytosolic small ribosomal subunit"/>
    <property type="evidence" value="ECO:0000266"/>
    <property type="project" value="PomBase"/>
</dbReference>
<dbReference type="GO" id="GO:0005634">
    <property type="term" value="C:nucleus"/>
    <property type="evidence" value="ECO:0007005"/>
    <property type="project" value="PomBase"/>
</dbReference>
<dbReference type="GO" id="GO:0031386">
    <property type="term" value="F:protein tag activity"/>
    <property type="evidence" value="ECO:0000318"/>
    <property type="project" value="GO_Central"/>
</dbReference>
<dbReference type="GO" id="GO:0003735">
    <property type="term" value="F:structural constituent of ribosome"/>
    <property type="evidence" value="ECO:0000266"/>
    <property type="project" value="PomBase"/>
</dbReference>
<dbReference type="GO" id="GO:0031625">
    <property type="term" value="F:ubiquitin protein ligase binding"/>
    <property type="evidence" value="ECO:0000318"/>
    <property type="project" value="GO_Central"/>
</dbReference>
<dbReference type="GO" id="GO:0008270">
    <property type="term" value="F:zinc ion binding"/>
    <property type="evidence" value="ECO:0007669"/>
    <property type="project" value="UniProtKB-KW"/>
</dbReference>
<dbReference type="GO" id="GO:0002181">
    <property type="term" value="P:cytoplasmic translation"/>
    <property type="evidence" value="ECO:0000266"/>
    <property type="project" value="PomBase"/>
</dbReference>
<dbReference type="GO" id="GO:0019941">
    <property type="term" value="P:modification-dependent protein catabolic process"/>
    <property type="evidence" value="ECO:0000318"/>
    <property type="project" value="GO_Central"/>
</dbReference>
<dbReference type="GO" id="GO:0016567">
    <property type="term" value="P:protein ubiquitination"/>
    <property type="evidence" value="ECO:0000318"/>
    <property type="project" value="GO_Central"/>
</dbReference>
<dbReference type="GO" id="GO:0042254">
    <property type="term" value="P:ribosome biogenesis"/>
    <property type="evidence" value="ECO:0000266"/>
    <property type="project" value="PomBase"/>
</dbReference>
<dbReference type="CDD" id="cd01803">
    <property type="entry name" value="Ubl_ubiquitin"/>
    <property type="match status" value="1"/>
</dbReference>
<dbReference type="FunFam" id="3.10.20.90:FF:000008">
    <property type="entry name" value="Ubiquitin-40S ribosomal protein S27a"/>
    <property type="match status" value="1"/>
</dbReference>
<dbReference type="Gene3D" id="6.20.50.150">
    <property type="match status" value="1"/>
</dbReference>
<dbReference type="Gene3D" id="3.10.20.90">
    <property type="entry name" value="Phosphatidylinositol 3-kinase Catalytic Subunit, Chain A, domain 1"/>
    <property type="match status" value="1"/>
</dbReference>
<dbReference type="InterPro" id="IPR002906">
    <property type="entry name" value="Ribosomal_eS31"/>
</dbReference>
<dbReference type="InterPro" id="IPR038582">
    <property type="entry name" value="Ribosomal_eS31_euk-type_sf"/>
</dbReference>
<dbReference type="InterPro" id="IPR011332">
    <property type="entry name" value="Ribosomal_zn-bd"/>
</dbReference>
<dbReference type="InterPro" id="IPR000626">
    <property type="entry name" value="Ubiquitin-like_dom"/>
</dbReference>
<dbReference type="InterPro" id="IPR029071">
    <property type="entry name" value="Ubiquitin-like_domsf"/>
</dbReference>
<dbReference type="InterPro" id="IPR019954">
    <property type="entry name" value="Ubiquitin_CS"/>
</dbReference>
<dbReference type="InterPro" id="IPR019956">
    <property type="entry name" value="Ubiquitin_dom"/>
</dbReference>
<dbReference type="InterPro" id="IPR050158">
    <property type="entry name" value="Ubiquitin_ubiquitin-like"/>
</dbReference>
<dbReference type="NCBIfam" id="NF001669">
    <property type="entry name" value="PRK00432.1"/>
    <property type="match status" value="1"/>
</dbReference>
<dbReference type="PANTHER" id="PTHR10666">
    <property type="entry name" value="UBIQUITIN"/>
    <property type="match status" value="1"/>
</dbReference>
<dbReference type="Pfam" id="PF01599">
    <property type="entry name" value="Ribosomal_S27"/>
    <property type="match status" value="1"/>
</dbReference>
<dbReference type="Pfam" id="PF00240">
    <property type="entry name" value="ubiquitin"/>
    <property type="match status" value="1"/>
</dbReference>
<dbReference type="PRINTS" id="PR00348">
    <property type="entry name" value="UBIQUITIN"/>
</dbReference>
<dbReference type="SMART" id="SM01402">
    <property type="entry name" value="Ribosomal_S27"/>
    <property type="match status" value="1"/>
</dbReference>
<dbReference type="SMART" id="SM00213">
    <property type="entry name" value="UBQ"/>
    <property type="match status" value="1"/>
</dbReference>
<dbReference type="SUPFAM" id="SSF54236">
    <property type="entry name" value="Ubiquitin-like"/>
    <property type="match status" value="1"/>
</dbReference>
<dbReference type="SUPFAM" id="SSF57829">
    <property type="entry name" value="Zn-binding ribosomal proteins"/>
    <property type="match status" value="1"/>
</dbReference>
<dbReference type="PROSITE" id="PS00299">
    <property type="entry name" value="UBIQUITIN_1"/>
    <property type="match status" value="1"/>
</dbReference>
<dbReference type="PROSITE" id="PS50053">
    <property type="entry name" value="UBIQUITIN_2"/>
    <property type="match status" value="1"/>
</dbReference>